<protein>
    <recommendedName>
        <fullName>Protein ELF4-LIKE 2</fullName>
    </recommendedName>
</protein>
<organism>
    <name type="scientific">Arabidopsis thaliana</name>
    <name type="common">Mouse-ear cress</name>
    <dbReference type="NCBI Taxonomy" id="3702"/>
    <lineage>
        <taxon>Eukaryota</taxon>
        <taxon>Viridiplantae</taxon>
        <taxon>Streptophyta</taxon>
        <taxon>Embryophyta</taxon>
        <taxon>Tracheophyta</taxon>
        <taxon>Spermatophyta</taxon>
        <taxon>Magnoliopsida</taxon>
        <taxon>eudicotyledons</taxon>
        <taxon>Gunneridae</taxon>
        <taxon>Pentapetalae</taxon>
        <taxon>rosids</taxon>
        <taxon>malvids</taxon>
        <taxon>Brassicales</taxon>
        <taxon>Brassicaceae</taxon>
        <taxon>Camelineae</taxon>
        <taxon>Arabidopsis</taxon>
    </lineage>
</organism>
<keyword id="KW-0090">Biological rhythms</keyword>
<keyword id="KW-0539">Nucleus</keyword>
<keyword id="KW-1185">Reference proteome</keyword>
<feature type="chain" id="PRO_0000408504" description="Protein ELF4-LIKE 2">
    <location>
        <begin position="1"/>
        <end position="119"/>
    </location>
</feature>
<feature type="region of interest" description="Disordered" evidence="2">
    <location>
        <begin position="91"/>
        <end position="119"/>
    </location>
</feature>
<feature type="compositionally biased region" description="Polar residues" evidence="2">
    <location>
        <begin position="93"/>
        <end position="111"/>
    </location>
</feature>
<proteinExistence type="evidence at transcript level"/>
<dbReference type="EMBL" id="AC010926">
    <property type="protein sequence ID" value="AAG51839.1"/>
    <property type="status" value="ALT_INIT"/>
    <property type="molecule type" value="Genomic_DNA"/>
</dbReference>
<dbReference type="EMBL" id="CP002684">
    <property type="protein sequence ID" value="AEE35350.1"/>
    <property type="molecule type" value="Genomic_DNA"/>
</dbReference>
<dbReference type="EMBL" id="AY039916">
    <property type="protein sequence ID" value="AAK64020.1"/>
    <property type="molecule type" value="mRNA"/>
</dbReference>
<dbReference type="EMBL" id="AY079311">
    <property type="protein sequence ID" value="AAL85042.1"/>
    <property type="molecule type" value="mRNA"/>
</dbReference>
<dbReference type="EMBL" id="AY085916">
    <property type="protein sequence ID" value="AAM63128.1"/>
    <property type="status" value="ALT_INIT"/>
    <property type="molecule type" value="mRNA"/>
</dbReference>
<dbReference type="PIR" id="H96750">
    <property type="entry name" value="H96750"/>
</dbReference>
<dbReference type="RefSeq" id="NP_565044.1">
    <property type="nucleotide sequence ID" value="NM_105922.4"/>
</dbReference>
<dbReference type="SMR" id="Q94BS8"/>
<dbReference type="BioGRID" id="28814">
    <property type="interactions" value="2"/>
</dbReference>
<dbReference type="FunCoup" id="Q94BS8">
    <property type="interactions" value="230"/>
</dbReference>
<dbReference type="IntAct" id="Q94BS8">
    <property type="interactions" value="1"/>
</dbReference>
<dbReference type="STRING" id="3702.Q94BS8"/>
<dbReference type="iPTMnet" id="Q94BS8"/>
<dbReference type="PaxDb" id="3702-AT1G72630.1"/>
<dbReference type="ProteomicsDB" id="224743"/>
<dbReference type="EnsemblPlants" id="AT1G72630.1">
    <property type="protein sequence ID" value="AT1G72630.1"/>
    <property type="gene ID" value="AT1G72630"/>
</dbReference>
<dbReference type="GeneID" id="843595"/>
<dbReference type="Gramene" id="AT1G72630.1">
    <property type="protein sequence ID" value="AT1G72630.1"/>
    <property type="gene ID" value="AT1G72630"/>
</dbReference>
<dbReference type="KEGG" id="ath:AT1G72630"/>
<dbReference type="Araport" id="AT1G72630"/>
<dbReference type="TAIR" id="AT1G72630">
    <property type="gene designation" value="ELF4-L2"/>
</dbReference>
<dbReference type="eggNOG" id="ENOG502R34Z">
    <property type="taxonomic scope" value="Eukaryota"/>
</dbReference>
<dbReference type="HOGENOM" id="CLU_119738_1_0_1"/>
<dbReference type="InParanoid" id="Q94BS8"/>
<dbReference type="OMA" id="IMQTFQK"/>
<dbReference type="OrthoDB" id="1895690at2759"/>
<dbReference type="PhylomeDB" id="Q94BS8"/>
<dbReference type="PRO" id="PR:Q94BS8"/>
<dbReference type="Proteomes" id="UP000006548">
    <property type="component" value="Chromosome 1"/>
</dbReference>
<dbReference type="ExpressionAtlas" id="Q94BS8">
    <property type="expression patterns" value="baseline and differential"/>
</dbReference>
<dbReference type="GO" id="GO:0005634">
    <property type="term" value="C:nucleus"/>
    <property type="evidence" value="ECO:0000250"/>
    <property type="project" value="UniProtKB"/>
</dbReference>
<dbReference type="GO" id="GO:0042803">
    <property type="term" value="F:protein homodimerization activity"/>
    <property type="evidence" value="ECO:0000250"/>
    <property type="project" value="UniProtKB"/>
</dbReference>
<dbReference type="GO" id="GO:0009648">
    <property type="term" value="P:photoperiodism"/>
    <property type="evidence" value="ECO:0000270"/>
    <property type="project" value="UniProtKB"/>
</dbReference>
<dbReference type="GO" id="GO:0042753">
    <property type="term" value="P:positive regulation of circadian rhythm"/>
    <property type="evidence" value="ECO:0007669"/>
    <property type="project" value="InterPro"/>
</dbReference>
<dbReference type="GO" id="GO:0048511">
    <property type="term" value="P:rhythmic process"/>
    <property type="evidence" value="ECO:0007669"/>
    <property type="project" value="UniProtKB-KW"/>
</dbReference>
<dbReference type="InterPro" id="IPR040462">
    <property type="entry name" value="EARLY_FLOWERING_4"/>
</dbReference>
<dbReference type="InterPro" id="IPR009741">
    <property type="entry name" value="EARLY_FLOWERING_4_dom"/>
</dbReference>
<dbReference type="PANTHER" id="PTHR33469:SF15">
    <property type="entry name" value="PROTEIN ELF4-LIKE 2"/>
    <property type="match status" value="1"/>
</dbReference>
<dbReference type="PANTHER" id="PTHR33469">
    <property type="entry name" value="PROTEIN ELF4-LIKE 4"/>
    <property type="match status" value="1"/>
</dbReference>
<dbReference type="Pfam" id="PF07011">
    <property type="entry name" value="Elf4"/>
    <property type="match status" value="1"/>
</dbReference>
<comment type="function">
    <text evidence="1">Component of the central CCA1/LHY-TOC1 feedback loop in the circadian clock that promotes clock accuracy and is required for sustained rhythms in the absence of daily light/dark cycles.</text>
</comment>
<comment type="subunit">
    <text evidence="1">Homodimer.</text>
</comment>
<comment type="subcellular location">
    <subcellularLocation>
        <location evidence="1">Nucleus</location>
    </subcellularLocation>
</comment>
<comment type="induction">
    <text evidence="3">Follows a light-dependent circadian-regulated expression with a peak at midday, about 6 hours after dawn.</text>
</comment>
<comment type="similarity">
    <text evidence="4">Belongs to the EARLY FLOWERING 4 family.</text>
</comment>
<comment type="sequence caution" evidence="4">
    <conflict type="erroneous initiation">
        <sequence resource="EMBL-CDS" id="AAG51839"/>
    </conflict>
    <text>Truncated N-terminus.</text>
</comment>
<comment type="sequence caution" evidence="4">
    <conflict type="erroneous initiation">
        <sequence resource="EMBL-CDS" id="AAM63128"/>
    </conflict>
    <text>Truncated N-terminus.</text>
</comment>
<accession>Q94BS8</accession>
<accession>Q9CAH8</accession>
<name>EF4L2_ARATH</name>
<reference key="1">
    <citation type="journal article" date="2000" name="Nature">
        <title>Sequence and analysis of chromosome 1 of the plant Arabidopsis thaliana.</title>
        <authorList>
            <person name="Theologis A."/>
            <person name="Ecker J.R."/>
            <person name="Palm C.J."/>
            <person name="Federspiel N.A."/>
            <person name="Kaul S."/>
            <person name="White O."/>
            <person name="Alonso J."/>
            <person name="Altafi H."/>
            <person name="Araujo R."/>
            <person name="Bowman C.L."/>
            <person name="Brooks S.Y."/>
            <person name="Buehler E."/>
            <person name="Chan A."/>
            <person name="Chao Q."/>
            <person name="Chen H."/>
            <person name="Cheuk R.F."/>
            <person name="Chin C.W."/>
            <person name="Chung M.K."/>
            <person name="Conn L."/>
            <person name="Conway A.B."/>
            <person name="Conway A.R."/>
            <person name="Creasy T.H."/>
            <person name="Dewar K."/>
            <person name="Dunn P."/>
            <person name="Etgu P."/>
            <person name="Feldblyum T.V."/>
            <person name="Feng J.-D."/>
            <person name="Fong B."/>
            <person name="Fujii C.Y."/>
            <person name="Gill J.E."/>
            <person name="Goldsmith A.D."/>
            <person name="Haas B."/>
            <person name="Hansen N.F."/>
            <person name="Hughes B."/>
            <person name="Huizar L."/>
            <person name="Hunter J.L."/>
            <person name="Jenkins J."/>
            <person name="Johnson-Hopson C."/>
            <person name="Khan S."/>
            <person name="Khaykin E."/>
            <person name="Kim C.J."/>
            <person name="Koo H.L."/>
            <person name="Kremenetskaia I."/>
            <person name="Kurtz D.B."/>
            <person name="Kwan A."/>
            <person name="Lam B."/>
            <person name="Langin-Hooper S."/>
            <person name="Lee A."/>
            <person name="Lee J.M."/>
            <person name="Lenz C.A."/>
            <person name="Li J.H."/>
            <person name="Li Y.-P."/>
            <person name="Lin X."/>
            <person name="Liu S.X."/>
            <person name="Liu Z.A."/>
            <person name="Luros J.S."/>
            <person name="Maiti R."/>
            <person name="Marziali A."/>
            <person name="Militscher J."/>
            <person name="Miranda M."/>
            <person name="Nguyen M."/>
            <person name="Nierman W.C."/>
            <person name="Osborne B.I."/>
            <person name="Pai G."/>
            <person name="Peterson J."/>
            <person name="Pham P.K."/>
            <person name="Rizzo M."/>
            <person name="Rooney T."/>
            <person name="Rowley D."/>
            <person name="Sakano H."/>
            <person name="Salzberg S.L."/>
            <person name="Schwartz J.R."/>
            <person name="Shinn P."/>
            <person name="Southwick A.M."/>
            <person name="Sun H."/>
            <person name="Tallon L.J."/>
            <person name="Tambunga G."/>
            <person name="Toriumi M.J."/>
            <person name="Town C.D."/>
            <person name="Utterback T."/>
            <person name="Van Aken S."/>
            <person name="Vaysberg M."/>
            <person name="Vysotskaia V.S."/>
            <person name="Walker M."/>
            <person name="Wu D."/>
            <person name="Yu G."/>
            <person name="Fraser C.M."/>
            <person name="Venter J.C."/>
            <person name="Davis R.W."/>
        </authorList>
    </citation>
    <scope>NUCLEOTIDE SEQUENCE [LARGE SCALE GENOMIC DNA]</scope>
    <source>
        <strain>cv. Columbia</strain>
    </source>
</reference>
<reference key="2">
    <citation type="journal article" date="2017" name="Plant J.">
        <title>Araport11: a complete reannotation of the Arabidopsis thaliana reference genome.</title>
        <authorList>
            <person name="Cheng C.Y."/>
            <person name="Krishnakumar V."/>
            <person name="Chan A.P."/>
            <person name="Thibaud-Nissen F."/>
            <person name="Schobel S."/>
            <person name="Town C.D."/>
        </authorList>
    </citation>
    <scope>GENOME REANNOTATION</scope>
    <source>
        <strain>cv. Columbia</strain>
    </source>
</reference>
<reference key="3">
    <citation type="journal article" date="2003" name="Science">
        <title>Empirical analysis of transcriptional activity in the Arabidopsis genome.</title>
        <authorList>
            <person name="Yamada K."/>
            <person name="Lim J."/>
            <person name="Dale J.M."/>
            <person name="Chen H."/>
            <person name="Shinn P."/>
            <person name="Palm C.J."/>
            <person name="Southwick A.M."/>
            <person name="Wu H.C."/>
            <person name="Kim C.J."/>
            <person name="Nguyen M."/>
            <person name="Pham P.K."/>
            <person name="Cheuk R.F."/>
            <person name="Karlin-Newmann G."/>
            <person name="Liu S.X."/>
            <person name="Lam B."/>
            <person name="Sakano H."/>
            <person name="Wu T."/>
            <person name="Yu G."/>
            <person name="Miranda M."/>
            <person name="Quach H.L."/>
            <person name="Tripp M."/>
            <person name="Chang C.H."/>
            <person name="Lee J.M."/>
            <person name="Toriumi M.J."/>
            <person name="Chan M.M."/>
            <person name="Tang C.C."/>
            <person name="Onodera C.S."/>
            <person name="Deng J.M."/>
            <person name="Akiyama K."/>
            <person name="Ansari Y."/>
            <person name="Arakawa T."/>
            <person name="Banh J."/>
            <person name="Banno F."/>
            <person name="Bowser L."/>
            <person name="Brooks S.Y."/>
            <person name="Carninci P."/>
            <person name="Chao Q."/>
            <person name="Choy N."/>
            <person name="Enju A."/>
            <person name="Goldsmith A.D."/>
            <person name="Gurjal M."/>
            <person name="Hansen N.F."/>
            <person name="Hayashizaki Y."/>
            <person name="Johnson-Hopson C."/>
            <person name="Hsuan V.W."/>
            <person name="Iida K."/>
            <person name="Karnes M."/>
            <person name="Khan S."/>
            <person name="Koesema E."/>
            <person name="Ishida J."/>
            <person name="Jiang P.X."/>
            <person name="Jones T."/>
            <person name="Kawai J."/>
            <person name="Kamiya A."/>
            <person name="Meyers C."/>
            <person name="Nakajima M."/>
            <person name="Narusaka M."/>
            <person name="Seki M."/>
            <person name="Sakurai T."/>
            <person name="Satou M."/>
            <person name="Tamse R."/>
            <person name="Vaysberg M."/>
            <person name="Wallender E.K."/>
            <person name="Wong C."/>
            <person name="Yamamura Y."/>
            <person name="Yuan S."/>
            <person name="Shinozaki K."/>
            <person name="Davis R.W."/>
            <person name="Theologis A."/>
            <person name="Ecker J.R."/>
        </authorList>
    </citation>
    <scope>NUCLEOTIDE SEQUENCE [LARGE SCALE MRNA]</scope>
    <source>
        <strain>cv. Columbia</strain>
    </source>
</reference>
<reference key="4">
    <citation type="submission" date="2002-03" db="EMBL/GenBank/DDBJ databases">
        <title>Full-length cDNA from Arabidopsis thaliana.</title>
        <authorList>
            <person name="Brover V.V."/>
            <person name="Troukhan M.E."/>
            <person name="Alexandrov N.A."/>
            <person name="Lu Y.-P."/>
            <person name="Flavell R.B."/>
            <person name="Feldmann K.A."/>
        </authorList>
    </citation>
    <scope>NUCLEOTIDE SEQUENCE [LARGE SCALE MRNA]</scope>
</reference>
<reference key="5">
    <citation type="journal article" date="2003" name="Plant Physiol.">
        <title>EARLY FLOWERING 4 functions in phytochrome B-regulated seedling de-etiolation.</title>
        <authorList>
            <person name="Khanna R."/>
            <person name="Kikis E.A."/>
            <person name="Quail P.H."/>
        </authorList>
    </citation>
    <scope>GENE FAMILY</scope>
</reference>
<reference key="6">
    <citation type="journal article" date="2009" name="HFSP J.">
        <title>Integrating ELF4 into the circadian system through combined structural and functional studies.</title>
        <authorList>
            <person name="Kolmos E."/>
            <person name="Nowak M."/>
            <person name="Werner M."/>
            <person name="Fischer K."/>
            <person name="Schwarz G."/>
            <person name="Mathews S."/>
            <person name="Schoof H."/>
            <person name="Nagy F."/>
            <person name="Bujnicki J.M."/>
            <person name="Davis S.J."/>
        </authorList>
    </citation>
    <scope>INDUCTION BY LIGHT</scope>
    <scope>GENE FAMILY</scope>
    <scope>NOMENCLATURE</scope>
</reference>
<sequence length="119" mass="13409">MESRMEGDVYSGFGERYQMDGKLLQNFQKSFVQVQDILDQNRLLINEINQNHESKQADHLGRNVGLIRELNNNIRTVASLYGDLSHSFARSVDASSEGESTGTLKSDGKANNQKRFRSG</sequence>
<evidence type="ECO:0000250" key="1"/>
<evidence type="ECO:0000256" key="2">
    <source>
        <dbReference type="SAM" id="MobiDB-lite"/>
    </source>
</evidence>
<evidence type="ECO:0000269" key="3">
    <source>
    </source>
</evidence>
<evidence type="ECO:0000305" key="4"/>
<gene>
    <name type="primary">EFL2</name>
    <name type="synonym">ELF4-L2</name>
    <name type="ordered locus">At1g72630</name>
    <name type="ORF">F28P22.18</name>
</gene>